<evidence type="ECO:0000250" key="1"/>
<evidence type="ECO:0000255" key="2"/>
<evidence type="ECO:0000255" key="3">
    <source>
        <dbReference type="PROSITE-ProRule" id="PRU01375"/>
    </source>
</evidence>
<evidence type="ECO:0000269" key="4">
    <source>
    </source>
</evidence>
<evidence type="ECO:0000305" key="5"/>
<evidence type="ECO:0007829" key="6">
    <source>
        <dbReference type="PDB" id="5LC2"/>
    </source>
</evidence>
<keyword id="KW-0002">3D-structure</keyword>
<keyword id="KW-0968">Cytoplasmic vesicle</keyword>
<keyword id="KW-0217">Developmental protein</keyword>
<keyword id="KW-1015">Disulfide bond</keyword>
<keyword id="KW-0430">Lectin</keyword>
<keyword id="KW-0553">Oncogene</keyword>
<keyword id="KW-1267">Proteomics identification</keyword>
<keyword id="KW-1185">Reference proteome</keyword>
<keyword id="KW-0964">Secreted</keyword>
<keyword id="KW-0732">Signal</keyword>
<feature type="signal peptide" evidence="2">
    <location>
        <begin position="1"/>
        <end position="24"/>
    </location>
</feature>
<feature type="chain" id="PRO_0000008752" description="Protein FAM3C">
    <location>
        <begin position="25"/>
        <end position="227"/>
    </location>
</feature>
<feature type="domain" description="GG-type lectin" evidence="3">
    <location>
        <begin position="67"/>
        <end position="225"/>
    </location>
</feature>
<feature type="disulfide bond" evidence="1">
    <location>
        <begin position="58"/>
        <end position="86"/>
    </location>
</feature>
<feature type="disulfide bond" evidence="1">
    <location>
        <begin position="64"/>
        <end position="221"/>
    </location>
</feature>
<feature type="helix" evidence="6">
    <location>
        <begin position="57"/>
        <end position="59"/>
    </location>
</feature>
<feature type="strand" evidence="6">
    <location>
        <begin position="66"/>
        <end position="74"/>
    </location>
</feature>
<feature type="turn" evidence="6">
    <location>
        <begin position="78"/>
        <end position="80"/>
    </location>
</feature>
<feature type="strand" evidence="6">
    <location>
        <begin position="84"/>
        <end position="87"/>
    </location>
</feature>
<feature type="strand" evidence="6">
    <location>
        <begin position="90"/>
        <end position="93"/>
    </location>
</feature>
<feature type="turn" evidence="6">
    <location>
        <begin position="95"/>
        <end position="98"/>
    </location>
</feature>
<feature type="strand" evidence="6">
    <location>
        <begin position="102"/>
        <end position="109"/>
    </location>
</feature>
<feature type="turn" evidence="6">
    <location>
        <begin position="111"/>
        <end position="113"/>
    </location>
</feature>
<feature type="strand" evidence="6">
    <location>
        <begin position="116"/>
        <end position="122"/>
    </location>
</feature>
<feature type="turn" evidence="6">
    <location>
        <begin position="124"/>
        <end position="126"/>
    </location>
</feature>
<feature type="helix" evidence="6">
    <location>
        <begin position="130"/>
        <end position="137"/>
    </location>
</feature>
<feature type="strand" evidence="6">
    <location>
        <begin position="144"/>
        <end position="151"/>
    </location>
</feature>
<feature type="helix" evidence="6">
    <location>
        <begin position="159"/>
        <end position="166"/>
    </location>
</feature>
<feature type="turn" evidence="6">
    <location>
        <begin position="167"/>
        <end position="169"/>
    </location>
</feature>
<feature type="helix" evidence="6">
    <location>
        <begin position="172"/>
        <end position="175"/>
    </location>
</feature>
<feature type="strand" evidence="6">
    <location>
        <begin position="181"/>
        <end position="187"/>
    </location>
</feature>
<feature type="strand" evidence="6">
    <location>
        <begin position="197"/>
        <end position="200"/>
    </location>
</feature>
<feature type="turn" evidence="6">
    <location>
        <begin position="204"/>
        <end position="206"/>
    </location>
</feature>
<feature type="strand" evidence="6">
    <location>
        <begin position="208"/>
        <end position="212"/>
    </location>
</feature>
<feature type="strand" evidence="6">
    <location>
        <begin position="217"/>
        <end position="223"/>
    </location>
</feature>
<organism>
    <name type="scientific">Homo sapiens</name>
    <name type="common">Human</name>
    <dbReference type="NCBI Taxonomy" id="9606"/>
    <lineage>
        <taxon>Eukaryota</taxon>
        <taxon>Metazoa</taxon>
        <taxon>Chordata</taxon>
        <taxon>Craniata</taxon>
        <taxon>Vertebrata</taxon>
        <taxon>Euteleostomi</taxon>
        <taxon>Mammalia</taxon>
        <taxon>Eutheria</taxon>
        <taxon>Euarchontoglires</taxon>
        <taxon>Primates</taxon>
        <taxon>Haplorrhini</taxon>
        <taxon>Catarrhini</taxon>
        <taxon>Hominidae</taxon>
        <taxon>Homo</taxon>
    </lineage>
</organism>
<sequence length="227" mass="24680">MRVAGAAKLVVAVAVFLLTFYVISQVFEIKMDASLGNLFARSALDTAARSTKPPRYKCGISKACPEKHFAFKMASGAANVVGPKICLEDNVLMSGVKNNVGRGINVALANGKTGEVLDTKYFDMWGGDVAPFIEFLKAIQDGTIVLMGTYDDGATKLNDEARRLIADLGSTSITNLGFRDNWVFCGGKGIKTKSPFEQHIKNNKDTNKYEGWPEVVEMEGCIPQKQD</sequence>
<name>FAM3C_HUMAN</name>
<accession>Q92520</accession>
<accession>A6NDN2</accession>
<accession>A8K3R7</accession>
<dbReference type="EMBL" id="D87120">
    <property type="protein sequence ID" value="BAA13251.1"/>
    <property type="molecule type" value="mRNA"/>
</dbReference>
<dbReference type="EMBL" id="AK290682">
    <property type="protein sequence ID" value="BAF83371.1"/>
    <property type="molecule type" value="mRNA"/>
</dbReference>
<dbReference type="EMBL" id="AK292731">
    <property type="protein sequence ID" value="BAF85420.1"/>
    <property type="molecule type" value="mRNA"/>
</dbReference>
<dbReference type="EMBL" id="AC006364">
    <property type="protein sequence ID" value="AAQ96872.1"/>
    <property type="molecule type" value="Genomic_DNA"/>
</dbReference>
<dbReference type="EMBL" id="CH471070">
    <property type="protein sequence ID" value="EAW83558.1"/>
    <property type="molecule type" value="Genomic_DNA"/>
</dbReference>
<dbReference type="EMBL" id="BC024200">
    <property type="protein sequence ID" value="AAH24200.1"/>
    <property type="molecule type" value="mRNA"/>
</dbReference>
<dbReference type="EMBL" id="BC046932">
    <property type="protein sequence ID" value="AAH46932.1"/>
    <property type="molecule type" value="mRNA"/>
</dbReference>
<dbReference type="EMBL" id="BC068526">
    <property type="protein sequence ID" value="AAH68526.1"/>
    <property type="molecule type" value="mRNA"/>
</dbReference>
<dbReference type="CCDS" id="CCDS5782.1"/>
<dbReference type="RefSeq" id="NP_001035109.1">
    <property type="nucleotide sequence ID" value="NM_001040020.2"/>
</dbReference>
<dbReference type="RefSeq" id="NP_055703.1">
    <property type="nucleotide sequence ID" value="NM_014888.3"/>
</dbReference>
<dbReference type="RefSeq" id="XP_011514038.1">
    <property type="nucleotide sequence ID" value="XM_011515736.3"/>
</dbReference>
<dbReference type="RefSeq" id="XP_011514039.1">
    <property type="nucleotide sequence ID" value="XM_011515737.3"/>
</dbReference>
<dbReference type="RefSeq" id="XP_047275727.1">
    <property type="nucleotide sequence ID" value="XM_047419771.1"/>
</dbReference>
<dbReference type="RefSeq" id="XP_047275728.1">
    <property type="nucleotide sequence ID" value="XM_047419772.1"/>
</dbReference>
<dbReference type="RefSeq" id="XP_047275729.1">
    <property type="nucleotide sequence ID" value="XM_047419773.1"/>
</dbReference>
<dbReference type="RefSeq" id="XP_047275730.1">
    <property type="nucleotide sequence ID" value="XM_047419774.1"/>
</dbReference>
<dbReference type="RefSeq" id="XP_047275731.1">
    <property type="nucleotide sequence ID" value="XM_047419775.1"/>
</dbReference>
<dbReference type="RefSeq" id="XP_054213056.1">
    <property type="nucleotide sequence ID" value="XM_054357081.1"/>
</dbReference>
<dbReference type="RefSeq" id="XP_054213057.1">
    <property type="nucleotide sequence ID" value="XM_054357082.1"/>
</dbReference>
<dbReference type="RefSeq" id="XP_054213058.1">
    <property type="nucleotide sequence ID" value="XM_054357083.1"/>
</dbReference>
<dbReference type="RefSeq" id="XP_054213059.1">
    <property type="nucleotide sequence ID" value="XM_054357084.1"/>
</dbReference>
<dbReference type="RefSeq" id="XP_054213060.1">
    <property type="nucleotide sequence ID" value="XM_054357085.1"/>
</dbReference>
<dbReference type="RefSeq" id="XP_054213061.1">
    <property type="nucleotide sequence ID" value="XM_054357086.1"/>
</dbReference>
<dbReference type="RefSeq" id="XP_054213062.1">
    <property type="nucleotide sequence ID" value="XM_054357087.1"/>
</dbReference>
<dbReference type="PDB" id="5LC2">
    <property type="method" value="X-ray"/>
    <property type="resolution" value="1.80 A"/>
    <property type="chains" value="A/B=55-227"/>
</dbReference>
<dbReference type="PDBsum" id="5LC2"/>
<dbReference type="SMR" id="Q92520"/>
<dbReference type="BioGRID" id="115712">
    <property type="interactions" value="119"/>
</dbReference>
<dbReference type="FunCoup" id="Q92520">
    <property type="interactions" value="963"/>
</dbReference>
<dbReference type="IntAct" id="Q92520">
    <property type="interactions" value="90"/>
</dbReference>
<dbReference type="MINT" id="Q92520"/>
<dbReference type="STRING" id="9606.ENSP00000353025"/>
<dbReference type="GlyGen" id="Q92520">
    <property type="glycosylation" value="1 site, 1 O-linked glycan (1 site)"/>
</dbReference>
<dbReference type="iPTMnet" id="Q92520"/>
<dbReference type="PhosphoSitePlus" id="Q92520"/>
<dbReference type="SwissPalm" id="Q92520"/>
<dbReference type="BioMuta" id="FAM3C"/>
<dbReference type="DMDM" id="3334194"/>
<dbReference type="jPOST" id="Q92520"/>
<dbReference type="MassIVE" id="Q92520"/>
<dbReference type="PaxDb" id="9606-ENSP00000353025"/>
<dbReference type="PeptideAtlas" id="Q92520"/>
<dbReference type="ProteomicsDB" id="75279"/>
<dbReference type="Pumba" id="Q92520"/>
<dbReference type="TopDownProteomics" id="Q92520"/>
<dbReference type="Antibodypedia" id="31703">
    <property type="antibodies" value="280 antibodies from 33 providers"/>
</dbReference>
<dbReference type="DNASU" id="10447"/>
<dbReference type="Ensembl" id="ENST00000359943.8">
    <property type="protein sequence ID" value="ENSP00000353025.3"/>
    <property type="gene ID" value="ENSG00000196937.11"/>
</dbReference>
<dbReference type="GeneID" id="10447"/>
<dbReference type="KEGG" id="hsa:10447"/>
<dbReference type="MANE-Select" id="ENST00000359943.8">
    <property type="protein sequence ID" value="ENSP00000353025.3"/>
    <property type="RefSeq nucleotide sequence ID" value="NM_014888.3"/>
    <property type="RefSeq protein sequence ID" value="NP_055703.1"/>
</dbReference>
<dbReference type="UCSC" id="uc003vjx.4">
    <property type="organism name" value="human"/>
</dbReference>
<dbReference type="AGR" id="HGNC:18664"/>
<dbReference type="CTD" id="10447"/>
<dbReference type="DisGeNET" id="10447"/>
<dbReference type="GeneCards" id="FAM3C"/>
<dbReference type="HGNC" id="HGNC:18664">
    <property type="gene designation" value="FAM3C"/>
</dbReference>
<dbReference type="HPA" id="ENSG00000196937">
    <property type="expression patterns" value="Low tissue specificity"/>
</dbReference>
<dbReference type="MalaCards" id="FAM3C"/>
<dbReference type="MIM" id="608618">
    <property type="type" value="gene"/>
</dbReference>
<dbReference type="neXtProt" id="NX_Q92520"/>
<dbReference type="OpenTargets" id="ENSG00000196937"/>
<dbReference type="PharmGKB" id="PA38627"/>
<dbReference type="VEuPathDB" id="HostDB:ENSG00000196937"/>
<dbReference type="eggNOG" id="ENOG502QQR8">
    <property type="taxonomic scope" value="Eukaryota"/>
</dbReference>
<dbReference type="GeneTree" id="ENSGT00950000183004"/>
<dbReference type="HOGENOM" id="CLU_099478_0_0_1"/>
<dbReference type="InParanoid" id="Q92520"/>
<dbReference type="OMA" id="KACPANH"/>
<dbReference type="OrthoDB" id="440755at2759"/>
<dbReference type="PAN-GO" id="Q92520">
    <property type="GO annotations" value="1 GO annotation based on evolutionary models"/>
</dbReference>
<dbReference type="PhylomeDB" id="Q92520"/>
<dbReference type="TreeFam" id="TF353414"/>
<dbReference type="PathwayCommons" id="Q92520"/>
<dbReference type="Reactome" id="R-HSA-114608">
    <property type="pathway name" value="Platelet degranulation"/>
</dbReference>
<dbReference type="SignaLink" id="Q92520"/>
<dbReference type="BioGRID-ORCS" id="10447">
    <property type="hits" value="27 hits in 1109 CRISPR screens"/>
</dbReference>
<dbReference type="ChiTaRS" id="FAM3C">
    <property type="organism name" value="human"/>
</dbReference>
<dbReference type="GeneWiki" id="FAM3C"/>
<dbReference type="GenomeRNAi" id="10447"/>
<dbReference type="Pharos" id="Q92520">
    <property type="development level" value="Tbio"/>
</dbReference>
<dbReference type="PRO" id="PR:Q92520"/>
<dbReference type="Proteomes" id="UP000005640">
    <property type="component" value="Chromosome 7"/>
</dbReference>
<dbReference type="RNAct" id="Q92520">
    <property type="molecule type" value="protein"/>
</dbReference>
<dbReference type="Bgee" id="ENSG00000196937">
    <property type="expression patterns" value="Expressed in jejunal mucosa and 211 other cell types or tissues"/>
</dbReference>
<dbReference type="ExpressionAtlas" id="Q92520">
    <property type="expression patterns" value="baseline and differential"/>
</dbReference>
<dbReference type="GO" id="GO:0070062">
    <property type="term" value="C:extracellular exosome"/>
    <property type="evidence" value="ECO:0007005"/>
    <property type="project" value="UniProtKB"/>
</dbReference>
<dbReference type="GO" id="GO:0005576">
    <property type="term" value="C:extracellular region"/>
    <property type="evidence" value="ECO:0000304"/>
    <property type="project" value="Reactome"/>
</dbReference>
<dbReference type="GO" id="GO:0005615">
    <property type="term" value="C:extracellular space"/>
    <property type="evidence" value="ECO:0000318"/>
    <property type="project" value="GO_Central"/>
</dbReference>
<dbReference type="GO" id="GO:0005794">
    <property type="term" value="C:Golgi apparatus"/>
    <property type="evidence" value="ECO:0000314"/>
    <property type="project" value="HPA"/>
</dbReference>
<dbReference type="GO" id="GO:0031089">
    <property type="term" value="C:platelet dense granule lumen"/>
    <property type="evidence" value="ECO:0000304"/>
    <property type="project" value="Reactome"/>
</dbReference>
<dbReference type="GO" id="GO:0030246">
    <property type="term" value="F:carbohydrate binding"/>
    <property type="evidence" value="ECO:0007669"/>
    <property type="project" value="UniProtKB-KW"/>
</dbReference>
<dbReference type="GO" id="GO:0005125">
    <property type="term" value="F:cytokine activity"/>
    <property type="evidence" value="ECO:0000303"/>
    <property type="project" value="UniProtKB"/>
</dbReference>
<dbReference type="GO" id="GO:0009913">
    <property type="term" value="P:epidermal cell differentiation"/>
    <property type="evidence" value="ECO:0007669"/>
    <property type="project" value="Ensembl"/>
</dbReference>
<dbReference type="GO" id="GO:0070371">
    <property type="term" value="P:ERK1 and ERK2 cascade"/>
    <property type="evidence" value="ECO:0007669"/>
    <property type="project" value="Ensembl"/>
</dbReference>
<dbReference type="GO" id="GO:0010467">
    <property type="term" value="P:gene expression"/>
    <property type="evidence" value="ECO:0007669"/>
    <property type="project" value="Ensembl"/>
</dbReference>
<dbReference type="GO" id="GO:0006954">
    <property type="term" value="P:inflammatory response"/>
    <property type="evidence" value="ECO:0007669"/>
    <property type="project" value="Ensembl"/>
</dbReference>
<dbReference type="GO" id="GO:0043616">
    <property type="term" value="P:keratinocyte proliferation"/>
    <property type="evidence" value="ECO:0007669"/>
    <property type="project" value="Ensembl"/>
</dbReference>
<dbReference type="GO" id="GO:0030223">
    <property type="term" value="P:neutrophil differentiation"/>
    <property type="evidence" value="ECO:0007669"/>
    <property type="project" value="Ensembl"/>
</dbReference>
<dbReference type="GO" id="GO:0043491">
    <property type="term" value="P:phosphatidylinositol 3-kinase/protein kinase B signal transduction"/>
    <property type="evidence" value="ECO:0007669"/>
    <property type="project" value="Ensembl"/>
</dbReference>
<dbReference type="CDD" id="cd13940">
    <property type="entry name" value="ILEI_FAM3C"/>
    <property type="match status" value="1"/>
</dbReference>
<dbReference type="InterPro" id="IPR039220">
    <property type="entry name" value="FAM3"/>
</dbReference>
<dbReference type="InterPro" id="IPR039477">
    <property type="entry name" value="ILEI/PANDER_dom"/>
</dbReference>
<dbReference type="InterPro" id="IPR039475">
    <property type="entry name" value="ILEI_FAM3C"/>
</dbReference>
<dbReference type="PANTHER" id="PTHR14592">
    <property type="entry name" value="UNCHARACTERIZED FAM3"/>
    <property type="match status" value="1"/>
</dbReference>
<dbReference type="Pfam" id="PF15711">
    <property type="entry name" value="ILEI"/>
    <property type="match status" value="1"/>
</dbReference>
<dbReference type="PROSITE" id="PS52031">
    <property type="entry name" value="GG_LECTIN"/>
    <property type="match status" value="1"/>
</dbReference>
<gene>
    <name type="primary">FAM3C</name>
    <name type="synonym">ILEI</name>
    <name type="ORF">GS3786</name>
</gene>
<comment type="function">
    <text>May be involved in retinal laminar formation. Promotes epithelial to mesenchymal transition.</text>
</comment>
<comment type="interaction">
    <interactant intactId="EBI-2876774">
        <id>Q92520</id>
    </interactant>
    <interactant intactId="EBI-12078468">
        <id>Q8IVF2-3</id>
        <label>AHNAK2</label>
    </interactant>
    <organismsDiffer>false</organismsDiffer>
    <experiments>3</experiments>
</comment>
<comment type="interaction">
    <interactant intactId="EBI-2876774">
        <id>Q92520</id>
    </interactant>
    <interactant intactId="EBI-19125216">
        <id>Q86WK6</id>
        <label>AMIGO1</label>
    </interactant>
    <organismsDiffer>false</organismsDiffer>
    <experiments>3</experiments>
</comment>
<comment type="interaction">
    <interactant intactId="EBI-2876774">
        <id>Q92520</id>
    </interactant>
    <interactant intactId="EBI-12701138">
        <id>P41181</id>
        <label>AQP2</label>
    </interactant>
    <organismsDiffer>false</organismsDiffer>
    <experiments>3</experiments>
</comment>
<comment type="interaction">
    <interactant intactId="EBI-2876774">
        <id>Q92520</id>
    </interactant>
    <interactant intactId="EBI-700794">
        <id>Q13323</id>
        <label>BIK</label>
    </interactant>
    <organismsDiffer>false</organismsDiffer>
    <experiments>3</experiments>
</comment>
<comment type="interaction">
    <interactant intactId="EBI-2876774">
        <id>Q92520</id>
    </interactant>
    <interactant intactId="EBI-752094">
        <id>Q12982</id>
        <label>BNIP2</label>
    </interactant>
    <organismsDiffer>false</organismsDiffer>
    <experiments>3</experiments>
</comment>
<comment type="interaction">
    <interactant intactId="EBI-2876774">
        <id>Q92520</id>
    </interactant>
    <interactant intactId="EBI-749464">
        <id>Q12983</id>
        <label>BNIP3</label>
    </interactant>
    <organismsDiffer>false</organismsDiffer>
    <experiments>3</experiments>
</comment>
<comment type="interaction">
    <interactant intactId="EBI-2876774">
        <id>Q92520</id>
    </interactant>
    <interactant intactId="EBI-11977093">
        <id>Q6ZS10</id>
        <label>CLEC17A</label>
    </interactant>
    <organismsDiffer>false</organismsDiffer>
    <experiments>3</experiments>
</comment>
<comment type="interaction">
    <interactant intactId="EBI-2876774">
        <id>Q92520</id>
    </interactant>
    <interactant intactId="EBI-11749983">
        <id>Q9UHP7-3</id>
        <label>CLEC2D</label>
    </interactant>
    <organismsDiffer>false</organismsDiffer>
    <experiments>3</experiments>
</comment>
<comment type="interaction">
    <interactant intactId="EBI-2876774">
        <id>Q92520</id>
    </interactant>
    <interactant intactId="EBI-12807010">
        <id>Q9ULY5</id>
        <label>CLEC4E</label>
    </interactant>
    <organismsDiffer>false</organismsDiffer>
    <experiments>3</experiments>
</comment>
<comment type="interaction">
    <interactant intactId="EBI-2876774">
        <id>Q92520</id>
    </interactant>
    <interactant intactId="EBI-6942903">
        <id>Q96BA8</id>
        <label>CREB3L1</label>
    </interactant>
    <organismsDiffer>false</organismsDiffer>
    <experiments>4</experiments>
</comment>
<comment type="interaction">
    <interactant intactId="EBI-2876774">
        <id>Q92520</id>
    </interactant>
    <interactant intactId="EBI-747931">
        <id>P78310</id>
        <label>CXADR</label>
    </interactant>
    <organismsDiffer>false</organismsDiffer>
    <experiments>3</experiments>
</comment>
<comment type="interaction">
    <interactant intactId="EBI-2876774">
        <id>Q92520</id>
    </interactant>
    <interactant intactId="EBI-1046040">
        <id>P00387</id>
        <label>CYB5R3</label>
    </interactant>
    <organismsDiffer>false</organismsDiffer>
    <experiments>3</experiments>
</comment>
<comment type="interaction">
    <interactant intactId="EBI-2876774">
        <id>Q92520</id>
    </interactant>
    <interactant intactId="EBI-18535450">
        <id>Q9GZR5</id>
        <label>ELOVL4</label>
    </interactant>
    <organismsDiffer>false</organismsDiffer>
    <experiments>3</experiments>
</comment>
<comment type="interaction">
    <interactant intactId="EBI-2876774">
        <id>Q92520</id>
    </interactant>
    <interactant intactId="EBI-781551">
        <id>Q9Y282</id>
        <label>ERGIC3</label>
    </interactant>
    <organismsDiffer>false</organismsDiffer>
    <experiments>3</experiments>
</comment>
<comment type="interaction">
    <interactant intactId="EBI-2876774">
        <id>Q92520</id>
    </interactant>
    <interactant intactId="EBI-17973325">
        <id>P60508</id>
        <label>ERVFRD-1</label>
    </interactant>
    <organismsDiffer>false</organismsDiffer>
    <experiments>3</experiments>
</comment>
<comment type="interaction">
    <interactant intactId="EBI-2876774">
        <id>Q92520</id>
    </interactant>
    <interactant intactId="EBI-17640610">
        <id>P34910-2</id>
        <label>EVI2B</label>
    </interactant>
    <organismsDiffer>false</organismsDiffer>
    <experiments>3</experiments>
</comment>
<comment type="interaction">
    <interactant intactId="EBI-2876774">
        <id>Q92520</id>
    </interactant>
    <interactant intactId="EBI-18304435">
        <id>Q5JX71</id>
        <label>FAM209A</label>
    </interactant>
    <organismsDiffer>false</organismsDiffer>
    <experiments>3</experiments>
</comment>
<comment type="interaction">
    <interactant intactId="EBI-2876774">
        <id>Q92520</id>
    </interactant>
    <interactant intactId="EBI-2869867">
        <id>P12314</id>
        <label>FCGR1A</label>
    </interactant>
    <organismsDiffer>false</organismsDiffer>
    <experiments>3</experiments>
</comment>
<comment type="interaction">
    <interactant intactId="EBI-2876774">
        <id>Q92520</id>
    </interactant>
    <interactant intactId="EBI-2833934">
        <id>P55899</id>
        <label>FCGRT</label>
    </interactant>
    <organismsDiffer>false</organismsDiffer>
    <experiments>3</experiments>
</comment>
<comment type="interaction">
    <interactant intactId="EBI-2876774">
        <id>Q92520</id>
    </interactant>
    <interactant intactId="EBI-2833872">
        <id>O15552</id>
        <label>FFAR2</label>
    </interactant>
    <organismsDiffer>false</organismsDiffer>
    <experiments>3</experiments>
</comment>
<comment type="interaction">
    <interactant intactId="EBI-2876774">
        <id>Q92520</id>
    </interactant>
    <interactant intactId="EBI-3918971">
        <id>Q9Y680</id>
        <label>FKBP7</label>
    </interactant>
    <organismsDiffer>false</organismsDiffer>
    <experiments>3</experiments>
</comment>
<comment type="interaction">
    <interactant intactId="EBI-2876774">
        <id>Q92520</id>
    </interactant>
    <interactant intactId="EBI-12142257">
        <id>Q8TBE3</id>
        <label>FNDC9</label>
    </interactant>
    <organismsDiffer>false</organismsDiffer>
    <experiments>3</experiments>
</comment>
<comment type="interaction">
    <interactant intactId="EBI-2876774">
        <id>Q92520</id>
    </interactant>
    <interactant intactId="EBI-2868927">
        <id>Q6P531</id>
        <label>GGT6</label>
    </interactant>
    <organismsDiffer>false</organismsDiffer>
    <experiments>3</experiments>
</comment>
<comment type="interaction">
    <interactant intactId="EBI-2876774">
        <id>Q92520</id>
    </interactant>
    <interactant intactId="EBI-3909454">
        <id>O95377</id>
        <label>GJB5</label>
    </interactant>
    <organismsDiffer>false</organismsDiffer>
    <experiments>3</experiments>
</comment>
<comment type="interaction">
    <interactant intactId="EBI-2876774">
        <id>Q92520</id>
    </interactant>
    <interactant intactId="EBI-18076404">
        <id>O15529</id>
        <label>GPR42</label>
    </interactant>
    <organismsDiffer>false</organismsDiffer>
    <experiments>3</experiments>
</comment>
<comment type="interaction">
    <interactant intactId="EBI-2876774">
        <id>Q92520</id>
    </interactant>
    <interactant intactId="EBI-11721746">
        <id>Q8TED1</id>
        <label>GPX8</label>
    </interactant>
    <organismsDiffer>false</organismsDiffer>
    <experiments>3</experiments>
</comment>
<comment type="interaction">
    <interactant intactId="EBI-2876774">
        <id>Q92520</id>
    </interactant>
    <interactant intactId="EBI-2867874">
        <id>Q9UM44</id>
        <label>HHLA2</label>
    </interactant>
    <organismsDiffer>false</organismsDiffer>
    <experiments>3</experiments>
</comment>
<comment type="interaction">
    <interactant intactId="EBI-2876774">
        <id>Q92520</id>
    </interactant>
    <interactant intactId="EBI-80490">
        <id>P16871</id>
        <label>IL7R</label>
    </interactant>
    <organismsDiffer>false</organismsDiffer>
    <experiments>3</experiments>
</comment>
<comment type="interaction">
    <interactant intactId="EBI-2876774">
        <id>Q92520</id>
    </interactant>
    <interactant intactId="EBI-11987131">
        <id>P16389-2</id>
        <label>KCNA2</label>
    </interactant>
    <organismsDiffer>false</organismsDiffer>
    <experiments>3</experiments>
</comment>
<comment type="interaction">
    <interactant intactId="EBI-2876774">
        <id>Q92520</id>
    </interactant>
    <interactant intactId="EBI-8632435">
        <id>P43628</id>
        <label>KIR2DL3</label>
    </interactant>
    <organismsDiffer>false</organismsDiffer>
    <experiments>3</experiments>
</comment>
<comment type="interaction">
    <interactant intactId="EBI-2876774">
        <id>Q92520</id>
    </interactant>
    <interactant intactId="EBI-11304917">
        <id>Q8N386</id>
        <label>LRRC25</label>
    </interactant>
    <organismsDiffer>false</organismsDiffer>
    <experiments>3</experiments>
</comment>
<comment type="interaction">
    <interactant intactId="EBI-2876774">
        <id>Q92520</id>
    </interactant>
    <interactant intactId="EBI-11956541">
        <id>Q9GZY8-5</id>
        <label>MFF</label>
    </interactant>
    <organismsDiffer>false</organismsDiffer>
    <experiments>3</experiments>
</comment>
<comment type="interaction">
    <interactant intactId="EBI-2876774">
        <id>Q92520</id>
    </interactant>
    <interactant intactId="EBI-1771314">
        <id>Q15223</id>
        <label>NECTIN1</label>
    </interactant>
    <organismsDiffer>false</organismsDiffer>
    <experiments>3</experiments>
</comment>
<comment type="interaction">
    <interactant intactId="EBI-2876774">
        <id>Q92520</id>
    </interactant>
    <interactant intactId="EBI-716063">
        <id>Q13113</id>
        <label>PDZK1IP1</label>
    </interactant>
    <organismsDiffer>false</organismsDiffer>
    <experiments>3</experiments>
</comment>
<comment type="interaction">
    <interactant intactId="EBI-2876774">
        <id>Q92520</id>
    </interactant>
    <interactant intactId="EBI-10269209">
        <id>Q8NC24</id>
        <label>RELL2</label>
    </interactant>
    <organismsDiffer>false</organismsDiffer>
    <experiments>3</experiments>
</comment>
<comment type="interaction">
    <interactant intactId="EBI-2876774">
        <id>Q92520</id>
    </interactant>
    <interactant intactId="EBI-1056589">
        <id>Q96TC7</id>
        <label>RMDN3</label>
    </interactant>
    <organismsDiffer>false</organismsDiffer>
    <experiments>3</experiments>
</comment>
<comment type="interaction">
    <interactant intactId="EBI-2876774">
        <id>Q92520</id>
    </interactant>
    <interactant intactId="EBI-2372399">
        <id>O60930</id>
        <label>RNASEH1</label>
    </interactant>
    <organismsDiffer>false</organismsDiffer>
    <experiments>3</experiments>
</comment>
<comment type="interaction">
    <interactant intactId="EBI-2876774">
        <id>Q92520</id>
    </interactant>
    <interactant intactId="EBI-3920694">
        <id>Q9NR31</id>
        <label>SAR1A</label>
    </interactant>
    <organismsDiffer>false</organismsDiffer>
    <experiments>3</experiments>
</comment>
<comment type="interaction">
    <interactant intactId="EBI-2876774">
        <id>Q92520</id>
    </interactant>
    <interactant intactId="EBI-17247926">
        <id>Q9NY72</id>
        <label>SCN3B</label>
    </interactant>
    <organismsDiffer>false</organismsDiffer>
    <experiments>3</experiments>
</comment>
<comment type="interaction">
    <interactant intactId="EBI-2876774">
        <id>Q92520</id>
    </interactant>
    <interactant intactId="EBI-18159983">
        <id>Q3KNW5</id>
        <label>SLC10A6</label>
    </interactant>
    <organismsDiffer>false</organismsDiffer>
    <experiments>3</experiments>
</comment>
<comment type="interaction">
    <interactant intactId="EBI-2876774">
        <id>Q92520</id>
    </interactant>
    <interactant intactId="EBI-17595455">
        <id>P54219-3</id>
        <label>SLC18A1</label>
    </interactant>
    <organismsDiffer>false</organismsDiffer>
    <experiments>3</experiments>
</comment>
<comment type="interaction">
    <interactant intactId="EBI-2876774">
        <id>Q92520</id>
    </interactant>
    <interactant intactId="EBI-17295964">
        <id>Q9NQQ7-3</id>
        <label>SLC35C2</label>
    </interactant>
    <organismsDiffer>false</organismsDiffer>
    <experiments>3</experiments>
</comment>
<comment type="interaction">
    <interactant intactId="EBI-2876774">
        <id>Q92520</id>
    </interactant>
    <interactant intactId="EBI-12898013">
        <id>Q9NP94</id>
        <label>SLC39A2</label>
    </interactant>
    <organismsDiffer>false</organismsDiffer>
    <experiments>3</experiments>
</comment>
<comment type="interaction">
    <interactant intactId="EBI-2876774">
        <id>Q92520</id>
    </interactant>
    <interactant intactId="EBI-1057058">
        <id>Q99523</id>
        <label>SORT1</label>
    </interactant>
    <organismsDiffer>false</organismsDiffer>
    <experiments>3</experiments>
</comment>
<comment type="interaction">
    <interactant intactId="EBI-2876774">
        <id>Q92520</id>
    </interactant>
    <interactant intactId="EBI-12078338">
        <id>O43278-2</id>
        <label>SPINT1</label>
    </interactant>
    <organismsDiffer>false</organismsDiffer>
    <experiments>3</experiments>
</comment>
<comment type="interaction">
    <interactant intactId="EBI-2876774">
        <id>Q92520</id>
    </interactant>
    <interactant intactId="EBI-17280858">
        <id>Q8WWF3</id>
        <label>SSMEM1</label>
    </interactant>
    <organismsDiffer>false</organismsDiffer>
    <experiments>3</experiments>
</comment>
<comment type="interaction">
    <interactant intactId="EBI-2876774">
        <id>Q92520</id>
    </interactant>
    <interactant intactId="EBI-712466">
        <id>Q16623</id>
        <label>STX1A</label>
    </interactant>
    <organismsDiffer>false</organismsDiffer>
    <experiments>3</experiments>
</comment>
<comment type="interaction">
    <interactant intactId="EBI-2876774">
        <id>Q92520</id>
    </interactant>
    <interactant intactId="EBI-19027521">
        <id>Q8N6K0</id>
        <label>TEX29</label>
    </interactant>
    <organismsDiffer>false</organismsDiffer>
    <experiments>3</experiments>
</comment>
<comment type="interaction">
    <interactant intactId="EBI-2876774">
        <id>Q92520</id>
    </interactant>
    <interactant intactId="EBI-13351685">
        <id>Q96CE8</id>
        <label>TM4SF18</label>
    </interactant>
    <organismsDiffer>false</organismsDiffer>
    <experiments>3</experiments>
</comment>
<comment type="interaction">
    <interactant intactId="EBI-2876774">
        <id>Q92520</id>
    </interactant>
    <interactant intactId="EBI-10314986">
        <id>Q9NWD8</id>
        <label>TMEM248</label>
    </interactant>
    <organismsDiffer>false</organismsDiffer>
    <experiments>3</experiments>
</comment>
<comment type="interaction">
    <interactant intactId="EBI-2876774">
        <id>Q92520</id>
    </interactant>
    <interactant intactId="EBI-3923061">
        <id>Q96B21</id>
        <label>TMEM45B</label>
    </interactant>
    <organismsDiffer>false</organismsDiffer>
    <experiments>3</experiments>
</comment>
<comment type="interaction">
    <interactant intactId="EBI-2876774">
        <id>Q92520</id>
    </interactant>
    <interactant intactId="EBI-12886878">
        <id>Q6P5X7-2</id>
        <label>TMEM71</label>
    </interactant>
    <organismsDiffer>false</organismsDiffer>
    <experiments>3</experiments>
</comment>
<comment type="interaction">
    <interactant intactId="EBI-2876774">
        <id>Q92520</id>
    </interactant>
    <interactant intactId="EBI-11742770">
        <id>Q96HE8</id>
        <label>TMEM80</label>
    </interactant>
    <organismsDiffer>false</organismsDiffer>
    <experiments>3</experiments>
</comment>
<comment type="interaction">
    <interactant intactId="EBI-2876774">
        <id>Q92520</id>
    </interactant>
    <interactant intactId="EBI-12345267">
        <id>O15393-2</id>
        <label>TMPRSS2</label>
    </interactant>
    <organismsDiffer>false</organismsDiffer>
    <experiments>3</experiments>
</comment>
<comment type="interaction">
    <interactant intactId="EBI-2876774">
        <id>Q92520</id>
    </interactant>
    <interactant intactId="EBI-6447886">
        <id>Q9Y320</id>
        <label>TMX2</label>
    </interactant>
    <organismsDiffer>false</organismsDiffer>
    <experiments>3</experiments>
</comment>
<comment type="subcellular location">
    <subcellularLocation>
        <location evidence="1">Secreted</location>
    </subcellularLocation>
    <subcellularLocation>
        <location evidence="4">Cytoplasmic vesicle</location>
    </subcellularLocation>
    <text>Cytoplasmic in some cancer cells.</text>
</comment>
<comment type="tissue specificity">
    <text evidence="4">Present in most secretory epithelia (at protein level).</text>
</comment>
<comment type="miscellaneous">
    <text>Up-regulation and/or mislocalization in breast cancer and liver carcinoma cells is strongly correlated with metastasis formation and survival.</text>
</comment>
<comment type="similarity">
    <text evidence="5">Belongs to the FAM3 family.</text>
</comment>
<reference key="1">
    <citation type="submission" date="1996-08" db="EMBL/GenBank/DDBJ databases">
        <title>The cloning of a cDNA for novel genes expressed in human osteoblast.</title>
        <authorList>
            <person name="Ohno I."/>
            <person name="Hashimoto J."/>
            <person name="Takaoka K."/>
            <person name="Ochi T."/>
            <person name="Okubo K."/>
            <person name="Matsubara K."/>
        </authorList>
    </citation>
    <scope>NUCLEOTIDE SEQUENCE [MRNA]</scope>
    <source>
        <tissue>Bone</tissue>
    </source>
</reference>
<reference key="2">
    <citation type="journal article" date="2004" name="Nat. Genet.">
        <title>Complete sequencing and characterization of 21,243 full-length human cDNAs.</title>
        <authorList>
            <person name="Ota T."/>
            <person name="Suzuki Y."/>
            <person name="Nishikawa T."/>
            <person name="Otsuki T."/>
            <person name="Sugiyama T."/>
            <person name="Irie R."/>
            <person name="Wakamatsu A."/>
            <person name="Hayashi K."/>
            <person name="Sato H."/>
            <person name="Nagai K."/>
            <person name="Kimura K."/>
            <person name="Makita H."/>
            <person name="Sekine M."/>
            <person name="Obayashi M."/>
            <person name="Nishi T."/>
            <person name="Shibahara T."/>
            <person name="Tanaka T."/>
            <person name="Ishii S."/>
            <person name="Yamamoto J."/>
            <person name="Saito K."/>
            <person name="Kawai Y."/>
            <person name="Isono Y."/>
            <person name="Nakamura Y."/>
            <person name="Nagahari K."/>
            <person name="Murakami K."/>
            <person name="Yasuda T."/>
            <person name="Iwayanagi T."/>
            <person name="Wagatsuma M."/>
            <person name="Shiratori A."/>
            <person name="Sudo H."/>
            <person name="Hosoiri T."/>
            <person name="Kaku Y."/>
            <person name="Kodaira H."/>
            <person name="Kondo H."/>
            <person name="Sugawara M."/>
            <person name="Takahashi M."/>
            <person name="Kanda K."/>
            <person name="Yokoi T."/>
            <person name="Furuya T."/>
            <person name="Kikkawa E."/>
            <person name="Omura Y."/>
            <person name="Abe K."/>
            <person name="Kamihara K."/>
            <person name="Katsuta N."/>
            <person name="Sato K."/>
            <person name="Tanikawa M."/>
            <person name="Yamazaki M."/>
            <person name="Ninomiya K."/>
            <person name="Ishibashi T."/>
            <person name="Yamashita H."/>
            <person name="Murakawa K."/>
            <person name="Fujimori K."/>
            <person name="Tanai H."/>
            <person name="Kimata M."/>
            <person name="Watanabe M."/>
            <person name="Hiraoka S."/>
            <person name="Chiba Y."/>
            <person name="Ishida S."/>
            <person name="Ono Y."/>
            <person name="Takiguchi S."/>
            <person name="Watanabe S."/>
            <person name="Yosida M."/>
            <person name="Hotuta T."/>
            <person name="Kusano J."/>
            <person name="Kanehori K."/>
            <person name="Takahashi-Fujii A."/>
            <person name="Hara H."/>
            <person name="Tanase T.-O."/>
            <person name="Nomura Y."/>
            <person name="Togiya S."/>
            <person name="Komai F."/>
            <person name="Hara R."/>
            <person name="Takeuchi K."/>
            <person name="Arita M."/>
            <person name="Imose N."/>
            <person name="Musashino K."/>
            <person name="Yuuki H."/>
            <person name="Oshima A."/>
            <person name="Sasaki N."/>
            <person name="Aotsuka S."/>
            <person name="Yoshikawa Y."/>
            <person name="Matsunawa H."/>
            <person name="Ichihara T."/>
            <person name="Shiohata N."/>
            <person name="Sano S."/>
            <person name="Moriya S."/>
            <person name="Momiyama H."/>
            <person name="Satoh N."/>
            <person name="Takami S."/>
            <person name="Terashima Y."/>
            <person name="Suzuki O."/>
            <person name="Nakagawa S."/>
            <person name="Senoh A."/>
            <person name="Mizoguchi H."/>
            <person name="Goto Y."/>
            <person name="Shimizu F."/>
            <person name="Wakebe H."/>
            <person name="Hishigaki H."/>
            <person name="Watanabe T."/>
            <person name="Sugiyama A."/>
            <person name="Takemoto M."/>
            <person name="Kawakami B."/>
            <person name="Yamazaki M."/>
            <person name="Watanabe K."/>
            <person name="Kumagai A."/>
            <person name="Itakura S."/>
            <person name="Fukuzumi Y."/>
            <person name="Fujimori Y."/>
            <person name="Komiyama M."/>
            <person name="Tashiro H."/>
            <person name="Tanigami A."/>
            <person name="Fujiwara T."/>
            <person name="Ono T."/>
            <person name="Yamada K."/>
            <person name="Fujii Y."/>
            <person name="Ozaki K."/>
            <person name="Hirao M."/>
            <person name="Ohmori Y."/>
            <person name="Kawabata A."/>
            <person name="Hikiji T."/>
            <person name="Kobatake N."/>
            <person name="Inagaki H."/>
            <person name="Ikema Y."/>
            <person name="Okamoto S."/>
            <person name="Okitani R."/>
            <person name="Kawakami T."/>
            <person name="Noguchi S."/>
            <person name="Itoh T."/>
            <person name="Shigeta K."/>
            <person name="Senba T."/>
            <person name="Matsumura K."/>
            <person name="Nakajima Y."/>
            <person name="Mizuno T."/>
            <person name="Morinaga M."/>
            <person name="Sasaki M."/>
            <person name="Togashi T."/>
            <person name="Oyama M."/>
            <person name="Hata H."/>
            <person name="Watanabe M."/>
            <person name="Komatsu T."/>
            <person name="Mizushima-Sugano J."/>
            <person name="Satoh T."/>
            <person name="Shirai Y."/>
            <person name="Takahashi Y."/>
            <person name="Nakagawa K."/>
            <person name="Okumura K."/>
            <person name="Nagase T."/>
            <person name="Nomura N."/>
            <person name="Kikuchi H."/>
            <person name="Masuho Y."/>
            <person name="Yamashita R."/>
            <person name="Nakai K."/>
            <person name="Yada T."/>
            <person name="Nakamura Y."/>
            <person name="Ohara O."/>
            <person name="Isogai T."/>
            <person name="Sugano S."/>
        </authorList>
    </citation>
    <scope>NUCLEOTIDE SEQUENCE [LARGE SCALE MRNA]</scope>
</reference>
<reference key="3">
    <citation type="journal article" date="2003" name="Nature">
        <title>The DNA sequence of human chromosome 7.</title>
        <authorList>
            <person name="Hillier L.W."/>
            <person name="Fulton R.S."/>
            <person name="Fulton L.A."/>
            <person name="Graves T.A."/>
            <person name="Pepin K.H."/>
            <person name="Wagner-McPherson C."/>
            <person name="Layman D."/>
            <person name="Maas J."/>
            <person name="Jaeger S."/>
            <person name="Walker R."/>
            <person name="Wylie K."/>
            <person name="Sekhon M."/>
            <person name="Becker M.C."/>
            <person name="O'Laughlin M.D."/>
            <person name="Schaller M.E."/>
            <person name="Fewell G.A."/>
            <person name="Delehaunty K.D."/>
            <person name="Miner T.L."/>
            <person name="Nash W.E."/>
            <person name="Cordes M."/>
            <person name="Du H."/>
            <person name="Sun H."/>
            <person name="Edwards J."/>
            <person name="Bradshaw-Cordum H."/>
            <person name="Ali J."/>
            <person name="Andrews S."/>
            <person name="Isak A."/>
            <person name="Vanbrunt A."/>
            <person name="Nguyen C."/>
            <person name="Du F."/>
            <person name="Lamar B."/>
            <person name="Courtney L."/>
            <person name="Kalicki J."/>
            <person name="Ozersky P."/>
            <person name="Bielicki L."/>
            <person name="Scott K."/>
            <person name="Holmes A."/>
            <person name="Harkins R."/>
            <person name="Harris A."/>
            <person name="Strong C.M."/>
            <person name="Hou S."/>
            <person name="Tomlinson C."/>
            <person name="Dauphin-Kohlberg S."/>
            <person name="Kozlowicz-Reilly A."/>
            <person name="Leonard S."/>
            <person name="Rohlfing T."/>
            <person name="Rock S.M."/>
            <person name="Tin-Wollam A.-M."/>
            <person name="Abbott A."/>
            <person name="Minx P."/>
            <person name="Maupin R."/>
            <person name="Strowmatt C."/>
            <person name="Latreille P."/>
            <person name="Miller N."/>
            <person name="Johnson D."/>
            <person name="Murray J."/>
            <person name="Woessner J.P."/>
            <person name="Wendl M.C."/>
            <person name="Yang S.-P."/>
            <person name="Schultz B.R."/>
            <person name="Wallis J.W."/>
            <person name="Spieth J."/>
            <person name="Bieri T.A."/>
            <person name="Nelson J.O."/>
            <person name="Berkowicz N."/>
            <person name="Wohldmann P.E."/>
            <person name="Cook L.L."/>
            <person name="Hickenbotham M.T."/>
            <person name="Eldred J."/>
            <person name="Williams D."/>
            <person name="Bedell J.A."/>
            <person name="Mardis E.R."/>
            <person name="Clifton S.W."/>
            <person name="Chissoe S.L."/>
            <person name="Marra M.A."/>
            <person name="Raymond C."/>
            <person name="Haugen E."/>
            <person name="Gillett W."/>
            <person name="Zhou Y."/>
            <person name="James R."/>
            <person name="Phelps K."/>
            <person name="Iadanoto S."/>
            <person name="Bubb K."/>
            <person name="Simms E."/>
            <person name="Levy R."/>
            <person name="Clendenning J."/>
            <person name="Kaul R."/>
            <person name="Kent W.J."/>
            <person name="Furey T.S."/>
            <person name="Baertsch R.A."/>
            <person name="Brent M.R."/>
            <person name="Keibler E."/>
            <person name="Flicek P."/>
            <person name="Bork P."/>
            <person name="Suyama M."/>
            <person name="Bailey J.A."/>
            <person name="Portnoy M.E."/>
            <person name="Torrents D."/>
            <person name="Chinwalla A.T."/>
            <person name="Gish W.R."/>
            <person name="Eddy S.R."/>
            <person name="McPherson J.D."/>
            <person name="Olson M.V."/>
            <person name="Eichler E.E."/>
            <person name="Green E.D."/>
            <person name="Waterston R.H."/>
            <person name="Wilson R.K."/>
        </authorList>
    </citation>
    <scope>NUCLEOTIDE SEQUENCE [LARGE SCALE GENOMIC DNA]</scope>
</reference>
<reference key="4">
    <citation type="submission" date="2005-07" db="EMBL/GenBank/DDBJ databases">
        <authorList>
            <person name="Mural R.J."/>
            <person name="Istrail S."/>
            <person name="Sutton G.G."/>
            <person name="Florea L."/>
            <person name="Halpern A.L."/>
            <person name="Mobarry C.M."/>
            <person name="Lippert R."/>
            <person name="Walenz B."/>
            <person name="Shatkay H."/>
            <person name="Dew I."/>
            <person name="Miller J.R."/>
            <person name="Flanigan M.J."/>
            <person name="Edwards N.J."/>
            <person name="Bolanos R."/>
            <person name="Fasulo D."/>
            <person name="Halldorsson B.V."/>
            <person name="Hannenhalli S."/>
            <person name="Turner R."/>
            <person name="Yooseph S."/>
            <person name="Lu F."/>
            <person name="Nusskern D.R."/>
            <person name="Shue B.C."/>
            <person name="Zheng X.H."/>
            <person name="Zhong F."/>
            <person name="Delcher A.L."/>
            <person name="Huson D.H."/>
            <person name="Kravitz S.A."/>
            <person name="Mouchard L."/>
            <person name="Reinert K."/>
            <person name="Remington K.A."/>
            <person name="Clark A.G."/>
            <person name="Waterman M.S."/>
            <person name="Eichler E.E."/>
            <person name="Adams M.D."/>
            <person name="Hunkapiller M.W."/>
            <person name="Myers E.W."/>
            <person name="Venter J.C."/>
        </authorList>
    </citation>
    <scope>NUCLEOTIDE SEQUENCE [LARGE SCALE GENOMIC DNA]</scope>
</reference>
<reference key="5">
    <citation type="journal article" date="2004" name="Genome Res.">
        <title>The status, quality, and expansion of the NIH full-length cDNA project: the Mammalian Gene Collection (MGC).</title>
        <authorList>
            <consortium name="The MGC Project Team"/>
        </authorList>
    </citation>
    <scope>NUCLEOTIDE SEQUENCE [LARGE SCALE MRNA]</scope>
    <source>
        <tissue>Brain</tissue>
        <tissue>Duodenum</tissue>
        <tissue>Muscle</tissue>
    </source>
</reference>
<reference key="6">
    <citation type="journal article" date="2002" name="Genomics">
        <title>Cloning, expression, and initial characterization of a novel cytokine-like gene family.</title>
        <authorList>
            <person name="Zhu Y."/>
            <person name="Xu G."/>
            <person name="Patel A."/>
            <person name="McLaughlin M.M."/>
            <person name="Silverman C."/>
            <person name="Knecht K.A."/>
            <person name="Sweitzer S."/>
            <person name="Li X."/>
            <person name="McDonnell P."/>
            <person name="Mirabile R."/>
            <person name="Zimmerman D."/>
            <person name="Boyce R."/>
            <person name="Tierney L.A."/>
            <person name="Hu E."/>
            <person name="Livi G.P."/>
            <person name="Wolf B.A."/>
            <person name="Abdel-Meguid S.S."/>
            <person name="Rose G.D."/>
            <person name="Aurora R."/>
            <person name="Hensley P."/>
            <person name="Briggs M."/>
            <person name="Young P.R."/>
        </authorList>
    </citation>
    <scope>IDENTIFICATION</scope>
</reference>
<reference key="7">
    <citation type="journal article" date="2006" name="Cancer Cell">
        <title>ILEI: a cytokine essential for EMT, tumor formation, and late events in metastasis in epithelial cells.</title>
        <authorList>
            <person name="Waerner T."/>
            <person name="Alacakaptan M."/>
            <person name="Tamir I."/>
            <person name="Oberauer R."/>
            <person name="Gal A."/>
            <person name="Brabletz T."/>
            <person name="Schreiber M."/>
            <person name="Jechlinger M."/>
            <person name="Beug H."/>
        </authorList>
    </citation>
    <scope>TISSUE SPECIFICITY</scope>
    <scope>SUBCELLULAR LOCATION</scope>
    <scope>UP-REGULATION IN BREAST CANCER</scope>
</reference>
<reference key="8">
    <citation type="journal article" date="2009" name="Oncogene">
        <title>ILEI requires oncogenic Ras for the epithelial to mesenchymal transition of hepatocytes and liver carcinoma progression.</title>
        <authorList>
            <person name="Lahsnig C."/>
            <person name="Mikula M."/>
            <person name="Petz M."/>
            <person name="Zulehner G."/>
            <person name="Schneller D."/>
            <person name="van Zijl F."/>
            <person name="Huber H."/>
            <person name="Csiszar A."/>
            <person name="Beug H."/>
            <person name="Mikulits W."/>
        </authorList>
    </citation>
    <scope>UP-REGULATION IN BREAST CANCER</scope>
</reference>
<reference key="9">
    <citation type="journal article" date="2011" name="BMC Syst. Biol.">
        <title>Initial characterization of the human central proteome.</title>
        <authorList>
            <person name="Burkard T.R."/>
            <person name="Planyavsky M."/>
            <person name="Kaupe I."/>
            <person name="Breitwieser F.P."/>
            <person name="Buerckstuemmer T."/>
            <person name="Bennett K.L."/>
            <person name="Superti-Furga G."/>
            <person name="Colinge J."/>
        </authorList>
    </citation>
    <scope>IDENTIFICATION BY MASS SPECTROMETRY [LARGE SCALE ANALYSIS]</scope>
</reference>
<reference key="10">
    <citation type="journal article" date="2014" name="J. Proteomics">
        <title>An enzyme assisted RP-RPLC approach for in-depth analysis of human liver phosphoproteome.</title>
        <authorList>
            <person name="Bian Y."/>
            <person name="Song C."/>
            <person name="Cheng K."/>
            <person name="Dong M."/>
            <person name="Wang F."/>
            <person name="Huang J."/>
            <person name="Sun D."/>
            <person name="Wang L."/>
            <person name="Ye M."/>
            <person name="Zou H."/>
        </authorList>
    </citation>
    <scope>IDENTIFICATION BY MASS SPECTROMETRY [LARGE SCALE ANALYSIS]</scope>
    <source>
        <tissue>Liver</tissue>
    </source>
</reference>
<reference key="11">
    <citation type="journal article" date="2015" name="Proteomics">
        <title>N-terminome analysis of the human mitochondrial proteome.</title>
        <authorList>
            <person name="Vaca Jacome A.S."/>
            <person name="Rabilloud T."/>
            <person name="Schaeffer-Reiss C."/>
            <person name="Rompais M."/>
            <person name="Ayoub D."/>
            <person name="Lane L."/>
            <person name="Bairoch A."/>
            <person name="Van Dorsselaer A."/>
            <person name="Carapito C."/>
        </authorList>
    </citation>
    <scope>IDENTIFICATION BY MASS SPECTROMETRY [LARGE SCALE ANALYSIS]</scope>
</reference>
<proteinExistence type="evidence at protein level"/>
<protein>
    <recommendedName>
        <fullName>Protein FAM3C</fullName>
    </recommendedName>
    <alternativeName>
        <fullName>Interleukin-like EMT inducer</fullName>
    </alternativeName>
</protein>